<protein>
    <recommendedName>
        <fullName evidence="1">Uncharacterized protein C17orf113</fullName>
    </recommendedName>
</protein>
<feature type="chain" id="PRO_0000441414" description="Uncharacterized protein C17orf113">
    <location>
        <begin position="1"/>
        <end position="675"/>
    </location>
</feature>
<reference key="1">
    <citation type="journal article" date="2006" name="Nature">
        <title>DNA sequence of human chromosome 17 and analysis of rearrangement in the human lineage.</title>
        <authorList>
            <person name="Zody M.C."/>
            <person name="Garber M."/>
            <person name="Adams D.J."/>
            <person name="Sharpe T."/>
            <person name="Harrow J."/>
            <person name="Lupski J.R."/>
            <person name="Nicholson C."/>
            <person name="Searle S.M."/>
            <person name="Wilming L."/>
            <person name="Young S.K."/>
            <person name="Abouelleil A."/>
            <person name="Allen N.R."/>
            <person name="Bi W."/>
            <person name="Bloom T."/>
            <person name="Borowsky M.L."/>
            <person name="Bugalter B.E."/>
            <person name="Butler J."/>
            <person name="Chang J.L."/>
            <person name="Chen C.-K."/>
            <person name="Cook A."/>
            <person name="Corum B."/>
            <person name="Cuomo C.A."/>
            <person name="de Jong P.J."/>
            <person name="DeCaprio D."/>
            <person name="Dewar K."/>
            <person name="FitzGerald M."/>
            <person name="Gilbert J."/>
            <person name="Gibson R."/>
            <person name="Gnerre S."/>
            <person name="Goldstein S."/>
            <person name="Grafham D.V."/>
            <person name="Grocock R."/>
            <person name="Hafez N."/>
            <person name="Hagopian D.S."/>
            <person name="Hart E."/>
            <person name="Norman C.H."/>
            <person name="Humphray S."/>
            <person name="Jaffe D.B."/>
            <person name="Jones M."/>
            <person name="Kamal M."/>
            <person name="Khodiyar V.K."/>
            <person name="LaButti K."/>
            <person name="Laird G."/>
            <person name="Lehoczky J."/>
            <person name="Liu X."/>
            <person name="Lokyitsang T."/>
            <person name="Loveland J."/>
            <person name="Lui A."/>
            <person name="Macdonald P."/>
            <person name="Major J.E."/>
            <person name="Matthews L."/>
            <person name="Mauceli E."/>
            <person name="McCarroll S.A."/>
            <person name="Mihalev A.H."/>
            <person name="Mudge J."/>
            <person name="Nguyen C."/>
            <person name="Nicol R."/>
            <person name="O'Leary S.B."/>
            <person name="Osoegawa K."/>
            <person name="Schwartz D.C."/>
            <person name="Shaw-Smith C."/>
            <person name="Stankiewicz P."/>
            <person name="Steward C."/>
            <person name="Swarbreck D."/>
            <person name="Venkataraman V."/>
            <person name="Whittaker C.A."/>
            <person name="Yang X."/>
            <person name="Zimmer A.R."/>
            <person name="Bradley A."/>
            <person name="Hubbard T."/>
            <person name="Birren B.W."/>
            <person name="Rogers J."/>
            <person name="Lander E.S."/>
            <person name="Nusbaum C."/>
        </authorList>
    </citation>
    <scope>NUCLEOTIDE SEQUENCE [LARGE SCALE GENOMIC DNA]</scope>
</reference>
<gene>
    <name evidence="2" type="primary">C17orf113</name>
</gene>
<keyword id="KW-1267">Proteomics identification</keyword>
<keyword id="KW-1185">Reference proteome</keyword>
<proteinExistence type="evidence at protein level"/>
<organism>
    <name type="scientific">Homo sapiens</name>
    <name type="common">Human</name>
    <dbReference type="NCBI Taxonomy" id="9606"/>
    <lineage>
        <taxon>Eukaryota</taxon>
        <taxon>Metazoa</taxon>
        <taxon>Chordata</taxon>
        <taxon>Craniata</taxon>
        <taxon>Vertebrata</taxon>
        <taxon>Euteleostomi</taxon>
        <taxon>Mammalia</taxon>
        <taxon>Eutheria</taxon>
        <taxon>Euarchontoglires</taxon>
        <taxon>Primates</taxon>
        <taxon>Haplorrhini</taxon>
        <taxon>Catarrhini</taxon>
        <taxon>Hominidae</taxon>
        <taxon>Homo</taxon>
    </lineage>
</organism>
<sequence>MVPPGKKPAGEASNSNKKCKRYFNEHWKEEFTWLDFDYERKLMFCLECRQALVRNKHGKAENAFTVGTDNFQRHALLRHVTSGAHRQALAVNQGQPPFEGQAEGGGACPGLATTPASRGVKVELDPAKVAVLTTVYCMAKEDVPNDRCSALLELQRFNLCQALLGTEHGDYYSPRRVRDMQVAIASVLHTEACQRLKASPYVGLVLDETRDWPESHSLALFATSVSPCDGQPATTFLGSVELQEGEATAGQLLDILQAFGVSAPKLAWLSSSLPSERLGSVGPQLRATCPLLAELHCLPGRTDPEPPAYLGQYESILDALFRLHGGPSSHLVPELRAALDLAAIDLAGPRPVPWASLLPVVEAVAEAWPGLVPTLEAAALASPVAGSLALALRQFTFVAFTHLLLDALPSVQKLSLVLQAEEPDLALLQPLVMAAAASLQAQRGSGGARLQGFLQELASMDPDASSGRCTYRGVELLGYSEAAVRGLEWLRGSFLDSMRKGLQDSYPGPSLDAVAAFAAIFDPRRYPQAPEELGTHGEGALRVLLRGFAPAVVRQRALGDFALFKRVVFGLGRLGPRALCTQLACAHSELHELFPDFAALAALALALPAGAGLLDKVGRSRELRWWGQSGAGEGRGGHMVKIAVDGPPLHEFDFGLAVEFLESGWGEGFLGSQLT</sequence>
<evidence type="ECO:0000305" key="1"/>
<evidence type="ECO:0000312" key="2">
    <source>
        <dbReference type="HGNC" id="HGNC:53437"/>
    </source>
</evidence>
<accession>A0A1B0GUU1</accession>
<name>CQ113_HUMAN</name>
<dbReference type="EMBL" id="AC105024">
    <property type="status" value="NOT_ANNOTATED_CDS"/>
    <property type="molecule type" value="Genomic_DNA"/>
</dbReference>
<dbReference type="CCDS" id="CCDS86598.1"/>
<dbReference type="RefSeq" id="NP_001345590.1">
    <property type="nucleotide sequence ID" value="NM_001358661.2"/>
</dbReference>
<dbReference type="RefSeq" id="XP_003960787.2">
    <property type="nucleotide sequence ID" value="XM_003960738.5"/>
</dbReference>
<dbReference type="RefSeq" id="XP_011507066.1">
    <property type="nucleotide sequence ID" value="XM_011508764.1"/>
</dbReference>
<dbReference type="RefSeq" id="XP_011507067.1">
    <property type="nucleotide sequence ID" value="XM_011508765.2"/>
</dbReference>
<dbReference type="RefSeq" id="XP_011507068.1">
    <property type="nucleotide sequence ID" value="XM_011508766.2"/>
</dbReference>
<dbReference type="RefSeq" id="XP_011522777.1">
    <property type="nucleotide sequence ID" value="XM_011524475.2"/>
</dbReference>
<dbReference type="RefSeq" id="XP_011522778.1">
    <property type="nucleotide sequence ID" value="XM_011524476.1"/>
</dbReference>
<dbReference type="RefSeq" id="XP_011522779.1">
    <property type="nucleotide sequence ID" value="XM_011524477.2"/>
</dbReference>
<dbReference type="RefSeq" id="XP_011522780.1">
    <property type="nucleotide sequence ID" value="XM_011524478.2"/>
</dbReference>
<dbReference type="RefSeq" id="XP_047291174.1">
    <property type="nucleotide sequence ID" value="XM_047435218.1"/>
</dbReference>
<dbReference type="RefSeq" id="XP_054170830.1">
    <property type="nucleotide sequence ID" value="XM_054314855.1"/>
</dbReference>
<dbReference type="FunCoup" id="A0A1B0GUU1">
    <property type="interactions" value="6"/>
</dbReference>
<dbReference type="BioMuta" id="C17orf113"/>
<dbReference type="MassIVE" id="A0A1B0GUU1"/>
<dbReference type="PeptideAtlas" id="A0A1B0GUU1"/>
<dbReference type="Ensembl" id="ENST00000587304.3">
    <property type="protein sequence ID" value="ENSP00000490245.1"/>
    <property type="gene ID" value="ENSG00000267221.3"/>
</dbReference>
<dbReference type="GeneID" id="110806298"/>
<dbReference type="MANE-Select" id="ENST00000587304.3">
    <property type="protein sequence ID" value="ENSP00000490245.1"/>
    <property type="RefSeq nucleotide sequence ID" value="NM_001358661.2"/>
    <property type="RefSeq protein sequence ID" value="NP_001345590.1"/>
</dbReference>
<dbReference type="AGR" id="HGNC:53437"/>
<dbReference type="GeneCards" id="C17orf113"/>
<dbReference type="HGNC" id="HGNC:53437">
    <property type="gene designation" value="C17orf113"/>
</dbReference>
<dbReference type="HPA" id="ENSG00000267221">
    <property type="expression patterns" value="Low tissue specificity"/>
</dbReference>
<dbReference type="neXtProt" id="NX_A0A1B0GUU1"/>
<dbReference type="VEuPathDB" id="HostDB:ENSG00000267221"/>
<dbReference type="GeneTree" id="ENSGT00940000154994"/>
<dbReference type="InParanoid" id="A0A1B0GUU1"/>
<dbReference type="OMA" id="HWKEEFP"/>
<dbReference type="OrthoDB" id="6159421at2759"/>
<dbReference type="PAN-GO" id="A0A1B0GUU1">
    <property type="GO annotations" value="0 GO annotations based on evolutionary models"/>
</dbReference>
<dbReference type="BioGRID-ORCS" id="201181">
    <property type="hits" value="4 hits in 230 CRISPR screens"/>
</dbReference>
<dbReference type="GenomeRNAi" id="201181"/>
<dbReference type="Pharos" id="A0A1B0GUU1">
    <property type="development level" value="Tdark"/>
</dbReference>
<dbReference type="PRO" id="PR:A0A1B0GUU1"/>
<dbReference type="Proteomes" id="UP000005640">
    <property type="component" value="Chromosome 17"/>
</dbReference>
<dbReference type="RNAct" id="A0A1B0GUU1">
    <property type="molecule type" value="protein"/>
</dbReference>
<dbReference type="Bgee" id="ENSG00000267221">
    <property type="expression patterns" value="Expressed in oviduct epithelium and 114 other cell types or tissues"/>
</dbReference>
<dbReference type="PANTHER" id="PTHR46880">
    <property type="entry name" value="RAS-ASSOCIATING DOMAIN-CONTAINING PROTEIN"/>
    <property type="match status" value="1"/>
</dbReference>
<dbReference type="PANTHER" id="PTHR46880:SF6">
    <property type="entry name" value="U1-TYPE DOMAIN-CONTAINING PROTEIN"/>
    <property type="match status" value="1"/>
</dbReference>
<dbReference type="Pfam" id="PF25431">
    <property type="entry name" value="zf-C17orf113"/>
    <property type="match status" value="1"/>
</dbReference>